<sequence>MPLVRVPATTANLGPGFDTLGMALNLFDELKIEESSSPEIIITGEGEGTIPRGQENIAYRAARAVFAKVGRPPVPLKLEMHNSIPVARGLGSSAAALVGAIVGTNAILGGPLGPAELVNLATTLEGHPDNVAPAILGGLVASARDGEQVICRRLELPPGLVTVVAIPQFTLSTRISRGVLPAKVDLEDAVFNISRVAVLLAAVATGDLDLMGRMMVDKLHQPYRLPLIPGMAEVFAAAREAGALAVTLSGSGPTVIAFCRGRQPKVGPAMAAAFARKGVKCTVKELAPCNHGAVVI</sequence>
<dbReference type="EC" id="2.7.1.39" evidence="1"/>
<dbReference type="EMBL" id="CP000232">
    <property type="protein sequence ID" value="ABC19618.1"/>
    <property type="molecule type" value="Genomic_DNA"/>
</dbReference>
<dbReference type="RefSeq" id="YP_430161.1">
    <property type="nucleotide sequence ID" value="NC_007644.1"/>
</dbReference>
<dbReference type="SMR" id="Q2RIX1"/>
<dbReference type="STRING" id="264732.Moth_1305"/>
<dbReference type="EnsemblBacteria" id="ABC19618">
    <property type="protein sequence ID" value="ABC19618"/>
    <property type="gene ID" value="Moth_1305"/>
</dbReference>
<dbReference type="KEGG" id="mta:Moth_1305"/>
<dbReference type="PATRIC" id="fig|264732.11.peg.1402"/>
<dbReference type="eggNOG" id="COG0083">
    <property type="taxonomic scope" value="Bacteria"/>
</dbReference>
<dbReference type="HOGENOM" id="CLU_041243_0_2_9"/>
<dbReference type="OrthoDB" id="9769912at2"/>
<dbReference type="UniPathway" id="UPA00050">
    <property type="reaction ID" value="UER00064"/>
</dbReference>
<dbReference type="GO" id="GO:0005737">
    <property type="term" value="C:cytoplasm"/>
    <property type="evidence" value="ECO:0007669"/>
    <property type="project" value="UniProtKB-SubCell"/>
</dbReference>
<dbReference type="GO" id="GO:0005524">
    <property type="term" value="F:ATP binding"/>
    <property type="evidence" value="ECO:0007669"/>
    <property type="project" value="UniProtKB-UniRule"/>
</dbReference>
<dbReference type="GO" id="GO:0004413">
    <property type="term" value="F:homoserine kinase activity"/>
    <property type="evidence" value="ECO:0007669"/>
    <property type="project" value="UniProtKB-UniRule"/>
</dbReference>
<dbReference type="GO" id="GO:0009088">
    <property type="term" value="P:threonine biosynthetic process"/>
    <property type="evidence" value="ECO:0007669"/>
    <property type="project" value="UniProtKB-UniRule"/>
</dbReference>
<dbReference type="Gene3D" id="3.30.230.10">
    <property type="match status" value="1"/>
</dbReference>
<dbReference type="Gene3D" id="3.30.70.890">
    <property type="entry name" value="GHMP kinase, C-terminal domain"/>
    <property type="match status" value="1"/>
</dbReference>
<dbReference type="HAMAP" id="MF_00384">
    <property type="entry name" value="Homoser_kinase"/>
    <property type="match status" value="1"/>
</dbReference>
<dbReference type="InterPro" id="IPR013750">
    <property type="entry name" value="GHMP_kinase_C_dom"/>
</dbReference>
<dbReference type="InterPro" id="IPR036554">
    <property type="entry name" value="GHMP_kinase_C_sf"/>
</dbReference>
<dbReference type="InterPro" id="IPR006204">
    <property type="entry name" value="GHMP_kinase_N_dom"/>
</dbReference>
<dbReference type="InterPro" id="IPR006203">
    <property type="entry name" value="GHMP_knse_ATP-bd_CS"/>
</dbReference>
<dbReference type="InterPro" id="IPR000870">
    <property type="entry name" value="Homoserine_kinase"/>
</dbReference>
<dbReference type="InterPro" id="IPR020568">
    <property type="entry name" value="Ribosomal_Su5_D2-typ_SF"/>
</dbReference>
<dbReference type="InterPro" id="IPR014721">
    <property type="entry name" value="Ribsml_uS5_D2-typ_fold_subgr"/>
</dbReference>
<dbReference type="NCBIfam" id="NF002288">
    <property type="entry name" value="PRK01212.1-4"/>
    <property type="match status" value="1"/>
</dbReference>
<dbReference type="NCBIfam" id="TIGR00191">
    <property type="entry name" value="thrB"/>
    <property type="match status" value="1"/>
</dbReference>
<dbReference type="PANTHER" id="PTHR20861:SF1">
    <property type="entry name" value="HOMOSERINE KINASE"/>
    <property type="match status" value="1"/>
</dbReference>
<dbReference type="PANTHER" id="PTHR20861">
    <property type="entry name" value="HOMOSERINE/4-DIPHOSPHOCYTIDYL-2-C-METHYL-D-ERYTHRITOL KINASE"/>
    <property type="match status" value="1"/>
</dbReference>
<dbReference type="Pfam" id="PF08544">
    <property type="entry name" value="GHMP_kinases_C"/>
    <property type="match status" value="1"/>
</dbReference>
<dbReference type="Pfam" id="PF00288">
    <property type="entry name" value="GHMP_kinases_N"/>
    <property type="match status" value="1"/>
</dbReference>
<dbReference type="PIRSF" id="PIRSF000676">
    <property type="entry name" value="Homoser_kin"/>
    <property type="match status" value="1"/>
</dbReference>
<dbReference type="PRINTS" id="PR00958">
    <property type="entry name" value="HOMSERKINASE"/>
</dbReference>
<dbReference type="SUPFAM" id="SSF55060">
    <property type="entry name" value="GHMP Kinase, C-terminal domain"/>
    <property type="match status" value="1"/>
</dbReference>
<dbReference type="SUPFAM" id="SSF54211">
    <property type="entry name" value="Ribosomal protein S5 domain 2-like"/>
    <property type="match status" value="1"/>
</dbReference>
<dbReference type="PROSITE" id="PS00627">
    <property type="entry name" value="GHMP_KINASES_ATP"/>
    <property type="match status" value="1"/>
</dbReference>
<keyword id="KW-0028">Amino-acid biosynthesis</keyword>
<keyword id="KW-0067">ATP-binding</keyword>
<keyword id="KW-0963">Cytoplasm</keyword>
<keyword id="KW-0418">Kinase</keyword>
<keyword id="KW-0547">Nucleotide-binding</keyword>
<keyword id="KW-0791">Threonine biosynthesis</keyword>
<keyword id="KW-0808">Transferase</keyword>
<comment type="function">
    <text evidence="1">Catalyzes the ATP-dependent phosphorylation of L-homoserine to L-homoserine phosphate.</text>
</comment>
<comment type="catalytic activity">
    <reaction evidence="1">
        <text>L-homoserine + ATP = O-phospho-L-homoserine + ADP + H(+)</text>
        <dbReference type="Rhea" id="RHEA:13985"/>
        <dbReference type="ChEBI" id="CHEBI:15378"/>
        <dbReference type="ChEBI" id="CHEBI:30616"/>
        <dbReference type="ChEBI" id="CHEBI:57476"/>
        <dbReference type="ChEBI" id="CHEBI:57590"/>
        <dbReference type="ChEBI" id="CHEBI:456216"/>
        <dbReference type="EC" id="2.7.1.39"/>
    </reaction>
</comment>
<comment type="pathway">
    <text evidence="1">Amino-acid biosynthesis; L-threonine biosynthesis; L-threonine from L-aspartate: step 4/5.</text>
</comment>
<comment type="subcellular location">
    <subcellularLocation>
        <location evidence="1">Cytoplasm</location>
    </subcellularLocation>
</comment>
<comment type="similarity">
    <text evidence="1">Belongs to the GHMP kinase family. Homoserine kinase subfamily.</text>
</comment>
<organism>
    <name type="scientific">Moorella thermoacetica (strain ATCC 39073 / JCM 9320)</name>
    <dbReference type="NCBI Taxonomy" id="264732"/>
    <lineage>
        <taxon>Bacteria</taxon>
        <taxon>Bacillati</taxon>
        <taxon>Bacillota</taxon>
        <taxon>Clostridia</taxon>
        <taxon>Moorellales</taxon>
        <taxon>Moorellaceae</taxon>
        <taxon>Moorella</taxon>
    </lineage>
</organism>
<accession>Q2RIX1</accession>
<protein>
    <recommendedName>
        <fullName evidence="1">Homoserine kinase</fullName>
        <shortName evidence="1">HK</shortName>
        <shortName evidence="1">HSK</shortName>
        <ecNumber evidence="1">2.7.1.39</ecNumber>
    </recommendedName>
</protein>
<reference key="1">
    <citation type="journal article" date="2008" name="Environ. Microbiol.">
        <title>The complete genome sequence of Moorella thermoacetica (f. Clostridium thermoaceticum).</title>
        <authorList>
            <person name="Pierce E."/>
            <person name="Xie G."/>
            <person name="Barabote R.D."/>
            <person name="Saunders E."/>
            <person name="Han C.S."/>
            <person name="Detter J.C."/>
            <person name="Richardson P."/>
            <person name="Brettin T.S."/>
            <person name="Das A."/>
            <person name="Ljungdahl L.G."/>
            <person name="Ragsdale S.W."/>
        </authorList>
    </citation>
    <scope>NUCLEOTIDE SEQUENCE [LARGE SCALE GENOMIC DNA]</scope>
    <source>
        <strain>ATCC 39073 / JCM 9320</strain>
    </source>
</reference>
<name>KHSE_MOOTA</name>
<proteinExistence type="inferred from homology"/>
<feature type="chain" id="PRO_1000049146" description="Homoserine kinase">
    <location>
        <begin position="1"/>
        <end position="296"/>
    </location>
</feature>
<feature type="binding site" evidence="1">
    <location>
        <begin position="85"/>
        <end position="95"/>
    </location>
    <ligand>
        <name>ATP</name>
        <dbReference type="ChEBI" id="CHEBI:30616"/>
    </ligand>
</feature>
<gene>
    <name evidence="1" type="primary">thrB</name>
    <name type="ordered locus">Moth_1305</name>
</gene>
<evidence type="ECO:0000255" key="1">
    <source>
        <dbReference type="HAMAP-Rule" id="MF_00384"/>
    </source>
</evidence>